<accession>Q4R5J1</accession>
<keyword id="KW-0007">Acetylation</keyword>
<keyword id="KW-0249">Electron transport</keyword>
<keyword id="KW-0472">Membrane</keyword>
<keyword id="KW-0496">Mitochondrion</keyword>
<keyword id="KW-0999">Mitochondrion inner membrane</keyword>
<keyword id="KW-0597">Phosphoprotein</keyword>
<keyword id="KW-1185">Reference proteome</keyword>
<keyword id="KW-0679">Respiratory chain</keyword>
<keyword id="KW-0813">Transport</keyword>
<feature type="initiator methionine" description="Removed" evidence="1">
    <location>
        <position position="1"/>
    </location>
</feature>
<feature type="chain" id="PRO_0000250705" description="NADH dehydrogenase [ubiquinone] 1 alpha subcomplex subunit 5">
    <location>
        <begin position="2"/>
        <end position="116"/>
    </location>
</feature>
<feature type="modified residue" description="N-acetylalanine" evidence="1">
    <location>
        <position position="2"/>
    </location>
</feature>
<feature type="modified residue" description="N6-acetyllysine" evidence="2">
    <location>
        <position position="30"/>
    </location>
</feature>
<feature type="modified residue" description="N6-acetyllysine" evidence="4">
    <location>
        <position position="46"/>
    </location>
</feature>
<feature type="modified residue" description="N6-acetyllysine" evidence="2">
    <location>
        <position position="60"/>
    </location>
</feature>
<feature type="modified residue" description="Phosphoserine" evidence="3">
    <location>
        <position position="89"/>
    </location>
</feature>
<feature type="modified residue" description="N6-acetyllysine; alternate" evidence="4">
    <location>
        <position position="98"/>
    </location>
</feature>
<feature type="modified residue" description="N6-succinyllysine; alternate" evidence="4">
    <location>
        <position position="98"/>
    </location>
</feature>
<organism>
    <name type="scientific">Macaca fascicularis</name>
    <name type="common">Crab-eating macaque</name>
    <name type="synonym">Cynomolgus monkey</name>
    <dbReference type="NCBI Taxonomy" id="9541"/>
    <lineage>
        <taxon>Eukaryota</taxon>
        <taxon>Metazoa</taxon>
        <taxon>Chordata</taxon>
        <taxon>Craniata</taxon>
        <taxon>Vertebrata</taxon>
        <taxon>Euteleostomi</taxon>
        <taxon>Mammalia</taxon>
        <taxon>Eutheria</taxon>
        <taxon>Euarchontoglires</taxon>
        <taxon>Primates</taxon>
        <taxon>Haplorrhini</taxon>
        <taxon>Catarrhini</taxon>
        <taxon>Cercopithecidae</taxon>
        <taxon>Cercopithecinae</taxon>
        <taxon>Macaca</taxon>
    </lineage>
</organism>
<dbReference type="EMBL" id="AB169552">
    <property type="protein sequence ID" value="BAE01634.1"/>
    <property type="molecule type" value="mRNA"/>
</dbReference>
<dbReference type="RefSeq" id="NP_001270884.1">
    <property type="nucleotide sequence ID" value="NM_001283955.1"/>
</dbReference>
<dbReference type="RefSeq" id="XP_045244402.2">
    <property type="nucleotide sequence ID" value="XM_045388467.2"/>
</dbReference>
<dbReference type="SMR" id="Q4R5J1"/>
<dbReference type="STRING" id="9541.ENSMFAP00000015399"/>
<dbReference type="Ensembl" id="ENSMFAT00000082209.1">
    <property type="protein sequence ID" value="ENSMFAP00000047190.1"/>
    <property type="gene ID" value="ENSMFAG00000047182.1"/>
</dbReference>
<dbReference type="GeneID" id="101865843"/>
<dbReference type="VEuPathDB" id="HostDB:ENSMFAG00000030932"/>
<dbReference type="eggNOG" id="KOG3365">
    <property type="taxonomic scope" value="Eukaryota"/>
</dbReference>
<dbReference type="GeneTree" id="ENSGT00390000008099"/>
<dbReference type="OMA" id="ENQWKWP"/>
<dbReference type="Proteomes" id="UP000233100">
    <property type="component" value="Chromosome 3"/>
</dbReference>
<dbReference type="GO" id="GO:0005743">
    <property type="term" value="C:mitochondrial inner membrane"/>
    <property type="evidence" value="ECO:0007669"/>
    <property type="project" value="UniProtKB-SubCell"/>
</dbReference>
<dbReference type="GO" id="GO:0045271">
    <property type="term" value="C:respiratory chain complex I"/>
    <property type="evidence" value="ECO:0000250"/>
    <property type="project" value="UniProtKB"/>
</dbReference>
<dbReference type="GO" id="GO:0022904">
    <property type="term" value="P:respiratory electron transport chain"/>
    <property type="evidence" value="ECO:0007669"/>
    <property type="project" value="InterPro"/>
</dbReference>
<dbReference type="InterPro" id="IPR006806">
    <property type="entry name" value="NDUFA5"/>
</dbReference>
<dbReference type="PANTHER" id="PTHR12653:SF0">
    <property type="entry name" value="NADH DEHYDROGENASE [UBIQUINONE] 1 ALPHA SUBCOMPLEX SUBUNIT 5"/>
    <property type="match status" value="1"/>
</dbReference>
<dbReference type="PANTHER" id="PTHR12653">
    <property type="entry name" value="NADH-UBIQUINONE OXIDOREDUCTASE 13 KD-B SUBUNIT"/>
    <property type="match status" value="1"/>
</dbReference>
<dbReference type="Pfam" id="PF04716">
    <property type="entry name" value="ETC_C1_NDUFA5"/>
    <property type="match status" value="1"/>
</dbReference>
<sequence>MAGVLKKTTGLVGLAVCSTPHERLSILYTKILDVLAEIPKNAAYRKYTEQITNEKLAMVKAEPDVKKLEDQLQGGQLEEVILQAEHELSLARKMRDWKPWEPLVEEPPADQWKWPI</sequence>
<name>NDUA5_MACFA</name>
<gene>
    <name type="primary">NDUFA5</name>
    <name type="ORF">QflA-12444</name>
</gene>
<protein>
    <recommendedName>
        <fullName>NADH dehydrogenase [ubiquinone] 1 alpha subcomplex subunit 5</fullName>
    </recommendedName>
    <alternativeName>
        <fullName>Complex I subunit B13</fullName>
    </alternativeName>
    <alternativeName>
        <fullName>Complex I-13kD-B</fullName>
        <shortName>CI-13kD-B</shortName>
    </alternativeName>
    <alternativeName>
        <fullName>NADH-ubiquinone oxidoreductase 13 kDa-B subunit</fullName>
    </alternativeName>
</protein>
<comment type="function">
    <text evidence="2">Accessory subunit of the mitochondrial membrane respiratory chain NADH dehydrogenase (Complex I), that is believed not to be involved in catalysis. Complex I functions in the transfer of electrons from NADH to the respiratory chain. The immediate electron acceptor for the enzyme is believed to be ubiquinone.</text>
</comment>
<comment type="subunit">
    <text evidence="2">Complex I is composed of 45 different subunits.</text>
</comment>
<comment type="subcellular location">
    <subcellularLocation>
        <location evidence="2">Mitochondrion inner membrane</location>
        <topology evidence="2">Peripheral membrane protein</topology>
        <orientation evidence="2">Matrix side</orientation>
    </subcellularLocation>
</comment>
<comment type="similarity">
    <text evidence="5">Belongs to the complex I NDUFA5 subunit family.</text>
</comment>
<reference key="1">
    <citation type="submission" date="2005-06" db="EMBL/GenBank/DDBJ databases">
        <title>DNA sequences of macaque genes expressed in brain or testis and its evolutionary implications.</title>
        <authorList>
            <consortium name="International consortium for macaque cDNA sequencing and analysis"/>
        </authorList>
    </citation>
    <scope>NUCLEOTIDE SEQUENCE [LARGE SCALE MRNA]</scope>
    <source>
        <tissue>Frontal cortex</tissue>
    </source>
</reference>
<proteinExistence type="inferred from homology"/>
<evidence type="ECO:0000250" key="1">
    <source>
        <dbReference type="UniProtKB" id="P23935"/>
    </source>
</evidence>
<evidence type="ECO:0000250" key="2">
    <source>
        <dbReference type="UniProtKB" id="Q16718"/>
    </source>
</evidence>
<evidence type="ECO:0000250" key="3">
    <source>
        <dbReference type="UniProtKB" id="Q63362"/>
    </source>
</evidence>
<evidence type="ECO:0000250" key="4">
    <source>
        <dbReference type="UniProtKB" id="Q9CPP6"/>
    </source>
</evidence>
<evidence type="ECO:0000305" key="5"/>